<comment type="function">
    <text evidence="1">Catalyzes the formation of the alpha-1,6-glucosidic linkages in glycogen by scission of a 1,4-alpha-linked oligosaccharide from growing alpha-1,4-glucan chains and the subsequent attachment of the oligosaccharide to the alpha-1,6 position.</text>
</comment>
<comment type="catalytic activity">
    <reaction evidence="1">
        <text>Transfers a segment of a (1-&gt;4)-alpha-D-glucan chain to a primary hydroxy group in a similar glucan chain.</text>
        <dbReference type="EC" id="2.4.1.18"/>
    </reaction>
</comment>
<comment type="pathway">
    <text evidence="1">Glycan biosynthesis; glycogen biosynthesis.</text>
</comment>
<comment type="subunit">
    <text evidence="1">Monomer.</text>
</comment>
<comment type="similarity">
    <text evidence="1">Belongs to the glycosyl hydrolase 13 family. GlgB subfamily.</text>
</comment>
<reference key="1">
    <citation type="journal article" date="2003" name="Proc. Natl. Acad. Sci. U.S.A.">
        <title>The complete genome sequence of the Arabidopsis and tomato pathogen Pseudomonas syringae pv. tomato DC3000.</title>
        <authorList>
            <person name="Buell C.R."/>
            <person name="Joardar V."/>
            <person name="Lindeberg M."/>
            <person name="Selengut J."/>
            <person name="Paulsen I.T."/>
            <person name="Gwinn M.L."/>
            <person name="Dodson R.J."/>
            <person name="DeBoy R.T."/>
            <person name="Durkin A.S."/>
            <person name="Kolonay J.F."/>
            <person name="Madupu R."/>
            <person name="Daugherty S.C."/>
            <person name="Brinkac L.M."/>
            <person name="Beanan M.J."/>
            <person name="Haft D.H."/>
            <person name="Nelson W.C."/>
            <person name="Davidsen T.M."/>
            <person name="Zafar N."/>
            <person name="Zhou L."/>
            <person name="Liu J."/>
            <person name="Yuan Q."/>
            <person name="Khouri H.M."/>
            <person name="Fedorova N.B."/>
            <person name="Tran B."/>
            <person name="Russell D."/>
            <person name="Berry K.J."/>
            <person name="Utterback T.R."/>
            <person name="Van Aken S.E."/>
            <person name="Feldblyum T.V."/>
            <person name="D'Ascenzo M."/>
            <person name="Deng W.-L."/>
            <person name="Ramos A.R."/>
            <person name="Alfano J.R."/>
            <person name="Cartinhour S."/>
            <person name="Chatterjee A.K."/>
            <person name="Delaney T.P."/>
            <person name="Lazarowitz S.G."/>
            <person name="Martin G.B."/>
            <person name="Schneider D.J."/>
            <person name="Tang X."/>
            <person name="Bender C.L."/>
            <person name="White O."/>
            <person name="Fraser C.M."/>
            <person name="Collmer A."/>
        </authorList>
    </citation>
    <scope>NUCLEOTIDE SEQUENCE [LARGE SCALE GENOMIC DNA]</scope>
    <source>
        <strain>ATCC BAA-871 / DC3000</strain>
    </source>
</reference>
<proteinExistence type="inferred from homology"/>
<keyword id="KW-0119">Carbohydrate metabolism</keyword>
<keyword id="KW-0320">Glycogen biosynthesis</keyword>
<keyword id="KW-0321">Glycogen metabolism</keyword>
<keyword id="KW-0328">Glycosyltransferase</keyword>
<keyword id="KW-1185">Reference proteome</keyword>
<keyword id="KW-0808">Transferase</keyword>
<dbReference type="EC" id="2.4.1.18" evidence="1"/>
<dbReference type="EMBL" id="AE016853">
    <property type="protein sequence ID" value="AAO56262.1"/>
    <property type="molecule type" value="Genomic_DNA"/>
</dbReference>
<dbReference type="RefSeq" id="NP_792567.1">
    <property type="nucleotide sequence ID" value="NC_004578.1"/>
</dbReference>
<dbReference type="RefSeq" id="WP_011104179.1">
    <property type="nucleotide sequence ID" value="NC_004578.1"/>
</dbReference>
<dbReference type="SMR" id="Q881X0"/>
<dbReference type="STRING" id="223283.PSPTO_2762"/>
<dbReference type="CAZy" id="CBM48">
    <property type="family name" value="Carbohydrate-Binding Module Family 48"/>
</dbReference>
<dbReference type="CAZy" id="GH13">
    <property type="family name" value="Glycoside Hydrolase Family 13"/>
</dbReference>
<dbReference type="DNASU" id="1184416"/>
<dbReference type="GeneID" id="1184416"/>
<dbReference type="KEGG" id="pst:PSPTO_2762"/>
<dbReference type="PATRIC" id="fig|223283.9.peg.2820"/>
<dbReference type="eggNOG" id="COG0296">
    <property type="taxonomic scope" value="Bacteria"/>
</dbReference>
<dbReference type="HOGENOM" id="CLU_004245_3_2_6"/>
<dbReference type="OrthoDB" id="9800174at2"/>
<dbReference type="PhylomeDB" id="Q881X0"/>
<dbReference type="UniPathway" id="UPA00164"/>
<dbReference type="Proteomes" id="UP000002515">
    <property type="component" value="Chromosome"/>
</dbReference>
<dbReference type="GO" id="GO:0005829">
    <property type="term" value="C:cytosol"/>
    <property type="evidence" value="ECO:0007669"/>
    <property type="project" value="TreeGrafter"/>
</dbReference>
<dbReference type="GO" id="GO:0003844">
    <property type="term" value="F:1,4-alpha-glucan branching enzyme activity"/>
    <property type="evidence" value="ECO:0007669"/>
    <property type="project" value="UniProtKB-UniRule"/>
</dbReference>
<dbReference type="GO" id="GO:0043169">
    <property type="term" value="F:cation binding"/>
    <property type="evidence" value="ECO:0007669"/>
    <property type="project" value="InterPro"/>
</dbReference>
<dbReference type="GO" id="GO:0004553">
    <property type="term" value="F:hydrolase activity, hydrolyzing O-glycosyl compounds"/>
    <property type="evidence" value="ECO:0007669"/>
    <property type="project" value="InterPro"/>
</dbReference>
<dbReference type="GO" id="GO:0005978">
    <property type="term" value="P:glycogen biosynthetic process"/>
    <property type="evidence" value="ECO:0007669"/>
    <property type="project" value="UniProtKB-UniRule"/>
</dbReference>
<dbReference type="CDD" id="cd11322">
    <property type="entry name" value="AmyAc_Glg_BE"/>
    <property type="match status" value="1"/>
</dbReference>
<dbReference type="CDD" id="cd02855">
    <property type="entry name" value="E_set_GBE_prok_N"/>
    <property type="match status" value="1"/>
</dbReference>
<dbReference type="FunFam" id="2.60.40.10:FF:000169">
    <property type="entry name" value="1,4-alpha-glucan branching enzyme GlgB"/>
    <property type="match status" value="1"/>
</dbReference>
<dbReference type="FunFam" id="2.60.40.1180:FF:000002">
    <property type="entry name" value="1,4-alpha-glucan branching enzyme GlgB"/>
    <property type="match status" value="1"/>
</dbReference>
<dbReference type="FunFam" id="3.20.20.80:FF:000003">
    <property type="entry name" value="1,4-alpha-glucan branching enzyme GlgB"/>
    <property type="match status" value="1"/>
</dbReference>
<dbReference type="Gene3D" id="3.20.20.80">
    <property type="entry name" value="Glycosidases"/>
    <property type="match status" value="1"/>
</dbReference>
<dbReference type="Gene3D" id="2.60.40.1180">
    <property type="entry name" value="Golgi alpha-mannosidase II"/>
    <property type="match status" value="1"/>
</dbReference>
<dbReference type="Gene3D" id="2.60.40.10">
    <property type="entry name" value="Immunoglobulins"/>
    <property type="match status" value="1"/>
</dbReference>
<dbReference type="HAMAP" id="MF_00685">
    <property type="entry name" value="GlgB"/>
    <property type="match status" value="1"/>
</dbReference>
<dbReference type="InterPro" id="IPR006048">
    <property type="entry name" value="A-amylase/branching_C"/>
</dbReference>
<dbReference type="InterPro" id="IPR037439">
    <property type="entry name" value="Branching_enzy"/>
</dbReference>
<dbReference type="InterPro" id="IPR006407">
    <property type="entry name" value="GlgB"/>
</dbReference>
<dbReference type="InterPro" id="IPR054169">
    <property type="entry name" value="GlgB_N"/>
</dbReference>
<dbReference type="InterPro" id="IPR044143">
    <property type="entry name" value="GlgB_N_E_set_prok"/>
</dbReference>
<dbReference type="InterPro" id="IPR006047">
    <property type="entry name" value="Glyco_hydro_13_cat_dom"/>
</dbReference>
<dbReference type="InterPro" id="IPR004193">
    <property type="entry name" value="Glyco_hydro_13_N"/>
</dbReference>
<dbReference type="InterPro" id="IPR013780">
    <property type="entry name" value="Glyco_hydro_b"/>
</dbReference>
<dbReference type="InterPro" id="IPR017853">
    <property type="entry name" value="Glycoside_hydrolase_SF"/>
</dbReference>
<dbReference type="InterPro" id="IPR013783">
    <property type="entry name" value="Ig-like_fold"/>
</dbReference>
<dbReference type="InterPro" id="IPR014756">
    <property type="entry name" value="Ig_E-set"/>
</dbReference>
<dbReference type="NCBIfam" id="TIGR01515">
    <property type="entry name" value="branching_enzym"/>
    <property type="match status" value="1"/>
</dbReference>
<dbReference type="NCBIfam" id="NF003811">
    <property type="entry name" value="PRK05402.1"/>
    <property type="match status" value="1"/>
</dbReference>
<dbReference type="NCBIfam" id="NF008967">
    <property type="entry name" value="PRK12313.1"/>
    <property type="match status" value="1"/>
</dbReference>
<dbReference type="PANTHER" id="PTHR43651">
    <property type="entry name" value="1,4-ALPHA-GLUCAN-BRANCHING ENZYME"/>
    <property type="match status" value="1"/>
</dbReference>
<dbReference type="PANTHER" id="PTHR43651:SF3">
    <property type="entry name" value="1,4-ALPHA-GLUCAN-BRANCHING ENZYME"/>
    <property type="match status" value="1"/>
</dbReference>
<dbReference type="Pfam" id="PF00128">
    <property type="entry name" value="Alpha-amylase"/>
    <property type="match status" value="1"/>
</dbReference>
<dbReference type="Pfam" id="PF02806">
    <property type="entry name" value="Alpha-amylase_C"/>
    <property type="match status" value="1"/>
</dbReference>
<dbReference type="Pfam" id="PF02922">
    <property type="entry name" value="CBM_48"/>
    <property type="match status" value="1"/>
</dbReference>
<dbReference type="Pfam" id="PF22019">
    <property type="entry name" value="GlgB_N"/>
    <property type="match status" value="1"/>
</dbReference>
<dbReference type="PIRSF" id="PIRSF000463">
    <property type="entry name" value="GlgB"/>
    <property type="match status" value="1"/>
</dbReference>
<dbReference type="SMART" id="SM00642">
    <property type="entry name" value="Aamy"/>
    <property type="match status" value="1"/>
</dbReference>
<dbReference type="SUPFAM" id="SSF51445">
    <property type="entry name" value="(Trans)glycosidases"/>
    <property type="match status" value="1"/>
</dbReference>
<dbReference type="SUPFAM" id="SSF81296">
    <property type="entry name" value="E set domains"/>
    <property type="match status" value="2"/>
</dbReference>
<dbReference type="SUPFAM" id="SSF51011">
    <property type="entry name" value="Glycosyl hydrolase domain"/>
    <property type="match status" value="1"/>
</dbReference>
<protein>
    <recommendedName>
        <fullName evidence="1">1,4-alpha-glucan branching enzyme GlgB</fullName>
        <ecNumber evidence="1">2.4.1.18</ecNumber>
    </recommendedName>
    <alternativeName>
        <fullName evidence="1">1,4-alpha-D-glucan:1,4-alpha-D-glucan 6-glucosyl-transferase</fullName>
    </alternativeName>
    <alternativeName>
        <fullName evidence="1">Alpha-(1-&gt;4)-glucan branching enzyme</fullName>
    </alternativeName>
    <alternativeName>
        <fullName evidence="1">Glycogen branching enzyme</fullName>
        <shortName evidence="1">BE</shortName>
    </alternativeName>
</protein>
<feature type="chain" id="PRO_0000188732" description="1,4-alpha-glucan branching enzyme GlgB">
    <location>
        <begin position="1"/>
        <end position="741"/>
    </location>
</feature>
<feature type="active site" description="Nucleophile" evidence="1">
    <location>
        <position position="420"/>
    </location>
</feature>
<feature type="active site" description="Proton donor" evidence="1">
    <location>
        <position position="473"/>
    </location>
</feature>
<sequence>MNAPDKTGTDRRAVPAAVDLDALIRAEHRDPFSILGPHDDGKGGQYVRAYLPAALSVRLLARDDGRELAELHMSDVPGFFVGHLEQPQPYLLKINWAGGEQITEDPYSYGPLLGEMDLYLFAEGNHRDLSSCLGAQVTSVDGVEGVRFAVWAPNARRVSVVGSFNGWDGRRHPMRLRHPTGVWEIFVPRLQPGEVYKYEILGAHGILPLKSDPMALATTLPPDTASKISAPLKFEWHDQDWLQSRAGRHDVAAPLSIYELHAGSWQMEQNDEGQWRQYNWRELADRLIPYVKELGFTHIELMPIMEHPFGGSWGYQLLAQFAPTARYGSPEDFAAFVDACHQAEIGVILDWVPAHFPTDTHGLAQFDGTALYEYADPKEGFHQDWDTLIYNLGRTEVHGFMLASALHWLKHYHIDGLRVDAVASMLYRDYSRKAGEWVPNRFGGRENLEAIDFLRHLNDVVALEAPGTMVIAEESTAWPGVSESTQKGGLGFNYKWNMGWMHDSLQYMEEDPINREHHHGKLSFSLVYAWSERFVLPISHDEVVHGKHSLIDKMPGDRWQKFANLRAYLAFMWTHPGKKLLFMGCEFGQWREWNHDEQLDWYLMQYAEHVGVKKLVGDLNRIYREEKALHQRDADPTGFQWLIGDDKSNSVFAYLRWSNDGEPLLVVANMTPVPREGYRVGVPLQGAWTELLNSDAETYAGSNIGNGGEVISEDEPVHGMSASLTLNLPPLAVLIFKPKKG</sequence>
<gene>
    <name evidence="1" type="primary">glgB</name>
    <name type="ordered locus">PSPTO_2762</name>
</gene>
<evidence type="ECO:0000255" key="1">
    <source>
        <dbReference type="HAMAP-Rule" id="MF_00685"/>
    </source>
</evidence>
<accession>Q881X0</accession>
<name>GLGB_PSESM</name>
<organism>
    <name type="scientific">Pseudomonas syringae pv. tomato (strain ATCC BAA-871 / DC3000)</name>
    <dbReference type="NCBI Taxonomy" id="223283"/>
    <lineage>
        <taxon>Bacteria</taxon>
        <taxon>Pseudomonadati</taxon>
        <taxon>Pseudomonadota</taxon>
        <taxon>Gammaproteobacteria</taxon>
        <taxon>Pseudomonadales</taxon>
        <taxon>Pseudomonadaceae</taxon>
        <taxon>Pseudomonas</taxon>
    </lineage>
</organism>